<gene>
    <name evidence="1" type="primary">deoC</name>
    <name type="ordered locus">SpyM50265</name>
</gene>
<sequence>MEVKDILKTVDHTLLATTATWPEIQTILDDAMAYETASACIPASYVKKAAEYVSGKLAICTVIGFPNGYSTTAAKVFECQDAIQNGADEIDMVINLTDVKNGDFDTVEEEIRQIKAKCQDHILKVIVETCQLTKEELIELCGVVTRSGADFIKTSTGFSTAGATFEDVEVMAKYVGEGVKIKAAGGISSLEDAKTFIALGASRLGTSRIIKIVKNEATKPDSY</sequence>
<evidence type="ECO:0000255" key="1">
    <source>
        <dbReference type="HAMAP-Rule" id="MF_00114"/>
    </source>
</evidence>
<reference key="1">
    <citation type="journal article" date="2007" name="J. Bacteriol.">
        <title>Complete genome of acute rheumatic fever-associated serotype M5 Streptococcus pyogenes strain Manfredo.</title>
        <authorList>
            <person name="Holden M.T.G."/>
            <person name="Scott A."/>
            <person name="Cherevach I."/>
            <person name="Chillingworth T."/>
            <person name="Churcher C."/>
            <person name="Cronin A."/>
            <person name="Dowd L."/>
            <person name="Feltwell T."/>
            <person name="Hamlin N."/>
            <person name="Holroyd S."/>
            <person name="Jagels K."/>
            <person name="Moule S."/>
            <person name="Mungall K."/>
            <person name="Quail M.A."/>
            <person name="Price C."/>
            <person name="Rabbinowitsch E."/>
            <person name="Sharp S."/>
            <person name="Skelton J."/>
            <person name="Whitehead S."/>
            <person name="Barrell B.G."/>
            <person name="Kehoe M."/>
            <person name="Parkhill J."/>
        </authorList>
    </citation>
    <scope>NUCLEOTIDE SEQUENCE [LARGE SCALE GENOMIC DNA]</scope>
    <source>
        <strain>Manfredo</strain>
    </source>
</reference>
<accession>A2RCN4</accession>
<feature type="chain" id="PRO_1000015335" description="Deoxyribose-phosphate aldolase">
    <location>
        <begin position="1"/>
        <end position="223"/>
    </location>
</feature>
<feature type="active site" description="Proton donor/acceptor" evidence="1">
    <location>
        <position position="91"/>
    </location>
</feature>
<feature type="active site" description="Schiff-base intermediate with acetaldehyde" evidence="1">
    <location>
        <position position="153"/>
    </location>
</feature>
<feature type="active site" description="Proton donor/acceptor" evidence="1">
    <location>
        <position position="182"/>
    </location>
</feature>
<proteinExistence type="inferred from homology"/>
<keyword id="KW-0963">Cytoplasm</keyword>
<keyword id="KW-0456">Lyase</keyword>
<keyword id="KW-0704">Schiff base</keyword>
<comment type="function">
    <text evidence="1">Catalyzes a reversible aldol reaction between acetaldehyde and D-glyceraldehyde 3-phosphate to generate 2-deoxy-D-ribose 5-phosphate.</text>
</comment>
<comment type="catalytic activity">
    <reaction evidence="1">
        <text>2-deoxy-D-ribose 5-phosphate = D-glyceraldehyde 3-phosphate + acetaldehyde</text>
        <dbReference type="Rhea" id="RHEA:12821"/>
        <dbReference type="ChEBI" id="CHEBI:15343"/>
        <dbReference type="ChEBI" id="CHEBI:59776"/>
        <dbReference type="ChEBI" id="CHEBI:62877"/>
        <dbReference type="EC" id="4.1.2.4"/>
    </reaction>
</comment>
<comment type="pathway">
    <text evidence="1">Carbohydrate degradation; 2-deoxy-D-ribose 1-phosphate degradation; D-glyceraldehyde 3-phosphate and acetaldehyde from 2-deoxy-alpha-D-ribose 1-phosphate: step 2/2.</text>
</comment>
<comment type="subcellular location">
    <subcellularLocation>
        <location evidence="1">Cytoplasm</location>
    </subcellularLocation>
</comment>
<comment type="similarity">
    <text evidence="1">Belongs to the DeoC/FbaB aldolase family. DeoC type 1 subfamily.</text>
</comment>
<protein>
    <recommendedName>
        <fullName evidence="1">Deoxyribose-phosphate aldolase</fullName>
        <shortName evidence="1">DERA</shortName>
        <ecNumber evidence="1">4.1.2.4</ecNumber>
    </recommendedName>
    <alternativeName>
        <fullName evidence="1">2-deoxy-D-ribose 5-phosphate aldolase</fullName>
    </alternativeName>
    <alternativeName>
        <fullName evidence="1">Phosphodeoxyriboaldolase</fullName>
        <shortName evidence="1">Deoxyriboaldolase</shortName>
    </alternativeName>
</protein>
<name>DEOC_STRPG</name>
<dbReference type="EC" id="4.1.2.4" evidence="1"/>
<dbReference type="EMBL" id="AM295007">
    <property type="protein sequence ID" value="CAM29607.1"/>
    <property type="molecule type" value="Genomic_DNA"/>
</dbReference>
<dbReference type="RefSeq" id="WP_011018205.1">
    <property type="nucleotide sequence ID" value="NC_009332.1"/>
</dbReference>
<dbReference type="SMR" id="A2RCN4"/>
<dbReference type="KEGG" id="spf:SpyM50265"/>
<dbReference type="HOGENOM" id="CLU_053595_0_2_9"/>
<dbReference type="UniPathway" id="UPA00002">
    <property type="reaction ID" value="UER00468"/>
</dbReference>
<dbReference type="GO" id="GO:0005737">
    <property type="term" value="C:cytoplasm"/>
    <property type="evidence" value="ECO:0007669"/>
    <property type="project" value="UniProtKB-SubCell"/>
</dbReference>
<dbReference type="GO" id="GO:0004139">
    <property type="term" value="F:deoxyribose-phosphate aldolase activity"/>
    <property type="evidence" value="ECO:0007669"/>
    <property type="project" value="UniProtKB-UniRule"/>
</dbReference>
<dbReference type="GO" id="GO:0006018">
    <property type="term" value="P:2-deoxyribose 1-phosphate catabolic process"/>
    <property type="evidence" value="ECO:0007669"/>
    <property type="project" value="UniProtKB-UniRule"/>
</dbReference>
<dbReference type="GO" id="GO:0016052">
    <property type="term" value="P:carbohydrate catabolic process"/>
    <property type="evidence" value="ECO:0007669"/>
    <property type="project" value="TreeGrafter"/>
</dbReference>
<dbReference type="GO" id="GO:0009264">
    <property type="term" value="P:deoxyribonucleotide catabolic process"/>
    <property type="evidence" value="ECO:0007669"/>
    <property type="project" value="InterPro"/>
</dbReference>
<dbReference type="CDD" id="cd00959">
    <property type="entry name" value="DeoC"/>
    <property type="match status" value="1"/>
</dbReference>
<dbReference type="FunFam" id="3.20.20.70:FF:000044">
    <property type="entry name" value="Deoxyribose-phosphate aldolase"/>
    <property type="match status" value="1"/>
</dbReference>
<dbReference type="Gene3D" id="3.20.20.70">
    <property type="entry name" value="Aldolase class I"/>
    <property type="match status" value="1"/>
</dbReference>
<dbReference type="HAMAP" id="MF_00114">
    <property type="entry name" value="DeoC_type1"/>
    <property type="match status" value="1"/>
</dbReference>
<dbReference type="InterPro" id="IPR013785">
    <property type="entry name" value="Aldolase_TIM"/>
</dbReference>
<dbReference type="InterPro" id="IPR011343">
    <property type="entry name" value="DeoC"/>
</dbReference>
<dbReference type="InterPro" id="IPR002915">
    <property type="entry name" value="DeoC/FbaB/LacD_aldolase"/>
</dbReference>
<dbReference type="InterPro" id="IPR028581">
    <property type="entry name" value="DeoC_typeI"/>
</dbReference>
<dbReference type="NCBIfam" id="TIGR00126">
    <property type="entry name" value="deoC"/>
    <property type="match status" value="1"/>
</dbReference>
<dbReference type="PANTHER" id="PTHR10889">
    <property type="entry name" value="DEOXYRIBOSE-PHOSPHATE ALDOLASE"/>
    <property type="match status" value="1"/>
</dbReference>
<dbReference type="PANTHER" id="PTHR10889:SF1">
    <property type="entry name" value="DEOXYRIBOSE-PHOSPHATE ALDOLASE"/>
    <property type="match status" value="1"/>
</dbReference>
<dbReference type="Pfam" id="PF01791">
    <property type="entry name" value="DeoC"/>
    <property type="match status" value="1"/>
</dbReference>
<dbReference type="PIRSF" id="PIRSF001357">
    <property type="entry name" value="DeoC"/>
    <property type="match status" value="1"/>
</dbReference>
<dbReference type="SMART" id="SM01133">
    <property type="entry name" value="DeoC"/>
    <property type="match status" value="1"/>
</dbReference>
<dbReference type="SUPFAM" id="SSF51569">
    <property type="entry name" value="Aldolase"/>
    <property type="match status" value="1"/>
</dbReference>
<organism>
    <name type="scientific">Streptococcus pyogenes serotype M5 (strain Manfredo)</name>
    <dbReference type="NCBI Taxonomy" id="160491"/>
    <lineage>
        <taxon>Bacteria</taxon>
        <taxon>Bacillati</taxon>
        <taxon>Bacillota</taxon>
        <taxon>Bacilli</taxon>
        <taxon>Lactobacillales</taxon>
        <taxon>Streptococcaceae</taxon>
        <taxon>Streptococcus</taxon>
    </lineage>
</organism>